<protein>
    <recommendedName>
        <fullName evidence="1">Putative pre-16S rRNA nuclease</fullName>
        <ecNumber evidence="1">3.1.-.-</ecNumber>
    </recommendedName>
</protein>
<accession>Q7MHJ8</accession>
<keyword id="KW-0963">Cytoplasm</keyword>
<keyword id="KW-0378">Hydrolase</keyword>
<keyword id="KW-0540">Nuclease</keyword>
<keyword id="KW-0690">Ribosome biogenesis</keyword>
<organism>
    <name type="scientific">Vibrio vulnificus (strain YJ016)</name>
    <dbReference type="NCBI Taxonomy" id="196600"/>
    <lineage>
        <taxon>Bacteria</taxon>
        <taxon>Pseudomonadati</taxon>
        <taxon>Pseudomonadota</taxon>
        <taxon>Gammaproteobacteria</taxon>
        <taxon>Vibrionales</taxon>
        <taxon>Vibrionaceae</taxon>
        <taxon>Vibrio</taxon>
    </lineage>
</organism>
<reference key="1">
    <citation type="journal article" date="2003" name="Genome Res.">
        <title>Comparative genome analysis of Vibrio vulnificus, a marine pathogen.</title>
        <authorList>
            <person name="Chen C.-Y."/>
            <person name="Wu K.-M."/>
            <person name="Chang Y.-C."/>
            <person name="Chang C.-H."/>
            <person name="Tsai H.-C."/>
            <person name="Liao T.-L."/>
            <person name="Liu Y.-M."/>
            <person name="Chen H.-J."/>
            <person name="Shen A.B.-T."/>
            <person name="Li J.-C."/>
            <person name="Su T.-L."/>
            <person name="Shao C.-P."/>
            <person name="Lee C.-T."/>
            <person name="Hor L.-I."/>
            <person name="Tsai S.-F."/>
        </authorList>
    </citation>
    <scope>NUCLEOTIDE SEQUENCE [LARGE SCALE GENOMIC DNA]</scope>
    <source>
        <strain>YJ016</strain>
    </source>
</reference>
<comment type="function">
    <text evidence="1">Could be a nuclease involved in processing of the 5'-end of pre-16S rRNA.</text>
</comment>
<comment type="subcellular location">
    <subcellularLocation>
        <location evidence="1">Cytoplasm</location>
    </subcellularLocation>
</comment>
<comment type="similarity">
    <text evidence="1">Belongs to the YqgF nuclease family.</text>
</comment>
<feature type="chain" id="PRO_0000172173" description="Putative pre-16S rRNA nuclease">
    <location>
        <begin position="1"/>
        <end position="140"/>
    </location>
</feature>
<sequence length="140" mass="15481">MSRTIMAFDFGTKSIGSAIGQEITGTASPLKAFKANDGIPNWDEIEKQIKEWQPNLLVVGLPTDLHGKALETITPRAKKFAQRLQGRFALPVELHDERLSTTEARSELFSMGGYKALSKGNVDCQSAVIILESWFEAQWG</sequence>
<proteinExistence type="inferred from homology"/>
<evidence type="ECO:0000255" key="1">
    <source>
        <dbReference type="HAMAP-Rule" id="MF_00651"/>
    </source>
</evidence>
<name>YQGF_VIBVY</name>
<dbReference type="EC" id="3.1.-.-" evidence="1"/>
<dbReference type="EMBL" id="BA000037">
    <property type="protein sequence ID" value="BAC95635.1"/>
    <property type="molecule type" value="Genomic_DNA"/>
</dbReference>
<dbReference type="RefSeq" id="WP_011151193.1">
    <property type="nucleotide sequence ID" value="NC_005139.1"/>
</dbReference>
<dbReference type="SMR" id="Q7MHJ8"/>
<dbReference type="STRING" id="672.VV93_v1c25770"/>
<dbReference type="KEGG" id="vvy:VV2870"/>
<dbReference type="PATRIC" id="fig|196600.6.peg.2857"/>
<dbReference type="eggNOG" id="COG0816">
    <property type="taxonomic scope" value="Bacteria"/>
</dbReference>
<dbReference type="HOGENOM" id="CLU_098240_3_0_6"/>
<dbReference type="Proteomes" id="UP000002675">
    <property type="component" value="Chromosome I"/>
</dbReference>
<dbReference type="GO" id="GO:0005829">
    <property type="term" value="C:cytosol"/>
    <property type="evidence" value="ECO:0007669"/>
    <property type="project" value="TreeGrafter"/>
</dbReference>
<dbReference type="GO" id="GO:0004518">
    <property type="term" value="F:nuclease activity"/>
    <property type="evidence" value="ECO:0007669"/>
    <property type="project" value="UniProtKB-KW"/>
</dbReference>
<dbReference type="GO" id="GO:0000967">
    <property type="term" value="P:rRNA 5'-end processing"/>
    <property type="evidence" value="ECO:0007669"/>
    <property type="project" value="UniProtKB-UniRule"/>
</dbReference>
<dbReference type="CDD" id="cd16964">
    <property type="entry name" value="YqgF"/>
    <property type="match status" value="1"/>
</dbReference>
<dbReference type="FunFam" id="3.30.420.140:FF:000002">
    <property type="entry name" value="Putative pre-16S rRNA nuclease"/>
    <property type="match status" value="1"/>
</dbReference>
<dbReference type="Gene3D" id="3.30.420.140">
    <property type="entry name" value="YqgF/RNase H-like domain"/>
    <property type="match status" value="1"/>
</dbReference>
<dbReference type="HAMAP" id="MF_00651">
    <property type="entry name" value="Nuclease_YqgF"/>
    <property type="match status" value="1"/>
</dbReference>
<dbReference type="InterPro" id="IPR012337">
    <property type="entry name" value="RNaseH-like_sf"/>
</dbReference>
<dbReference type="InterPro" id="IPR005227">
    <property type="entry name" value="YqgF"/>
</dbReference>
<dbReference type="InterPro" id="IPR006641">
    <property type="entry name" value="YqgF/RNaseH-like_dom"/>
</dbReference>
<dbReference type="InterPro" id="IPR037027">
    <property type="entry name" value="YqgF/RNaseH-like_dom_sf"/>
</dbReference>
<dbReference type="NCBIfam" id="TIGR00250">
    <property type="entry name" value="RNAse_H_YqgF"/>
    <property type="match status" value="1"/>
</dbReference>
<dbReference type="PANTHER" id="PTHR33317">
    <property type="entry name" value="POLYNUCLEOTIDYL TRANSFERASE, RIBONUCLEASE H-LIKE SUPERFAMILY PROTEIN"/>
    <property type="match status" value="1"/>
</dbReference>
<dbReference type="PANTHER" id="PTHR33317:SF4">
    <property type="entry name" value="POLYNUCLEOTIDYL TRANSFERASE, RIBONUCLEASE H-LIKE SUPERFAMILY PROTEIN"/>
    <property type="match status" value="1"/>
</dbReference>
<dbReference type="Pfam" id="PF03652">
    <property type="entry name" value="RuvX"/>
    <property type="match status" value="1"/>
</dbReference>
<dbReference type="SMART" id="SM00732">
    <property type="entry name" value="YqgFc"/>
    <property type="match status" value="1"/>
</dbReference>
<dbReference type="SUPFAM" id="SSF53098">
    <property type="entry name" value="Ribonuclease H-like"/>
    <property type="match status" value="1"/>
</dbReference>
<gene>
    <name type="ordered locus">VV2870</name>
</gene>